<protein>
    <recommendedName>
        <fullName evidence="10">Transcription factor MYB3R-1</fullName>
    </recommendedName>
    <alternativeName>
        <fullName evidence="10">Myb-related protein 3R-1</fullName>
    </alternativeName>
    <alternativeName>
        <fullName evidence="9">Plant c-MYB-like protein 1</fullName>
        <shortName evidence="9">Protein PC-MYB1</shortName>
    </alternativeName>
</protein>
<proteinExistence type="evidence at transcript level"/>
<reference key="1">
    <citation type="journal article" date="1999" name="Plant Physiol.">
        <title>Newly discovered plant c-myb-like genes rewrite the evolution of the plant myb gene family.</title>
        <authorList>
            <person name="Braun E.L."/>
            <person name="Grotewold E."/>
        </authorList>
    </citation>
    <scope>NUCLEOTIDE SEQUENCE [MRNA]</scope>
    <source>
        <strain>cv. Columbia</strain>
    </source>
</reference>
<reference key="2">
    <citation type="journal article" date="2000" name="Plant J.">
        <title>c-MYB oncogene-like genes encoding three MYB repeats occur in all major plant lineages.</title>
        <authorList>
            <person name="Kranz H."/>
            <person name="Scholz K."/>
            <person name="Weisshaar B."/>
        </authorList>
    </citation>
    <scope>NUCLEOTIDE SEQUENCE [GENOMIC DNA / MRNA]</scope>
    <scope>TISSUE SPECIFICITY</scope>
    <scope>VARIANTS</scope>
    <source>
        <strain>cv. Columbia</strain>
        <strain>cv. Landsberg erecta</strain>
    </source>
</reference>
<reference key="3">
    <citation type="journal article" date="1999" name="Nature">
        <title>Sequence and analysis of chromosome 4 of the plant Arabidopsis thaliana.</title>
        <authorList>
            <person name="Mayer K.F.X."/>
            <person name="Schueller C."/>
            <person name="Wambutt R."/>
            <person name="Murphy G."/>
            <person name="Volckaert G."/>
            <person name="Pohl T."/>
            <person name="Duesterhoeft A."/>
            <person name="Stiekema W."/>
            <person name="Entian K.-D."/>
            <person name="Terryn N."/>
            <person name="Harris B."/>
            <person name="Ansorge W."/>
            <person name="Brandt P."/>
            <person name="Grivell L.A."/>
            <person name="Rieger M."/>
            <person name="Weichselgartner M."/>
            <person name="de Simone V."/>
            <person name="Obermaier B."/>
            <person name="Mache R."/>
            <person name="Mueller M."/>
            <person name="Kreis M."/>
            <person name="Delseny M."/>
            <person name="Puigdomenech P."/>
            <person name="Watson M."/>
            <person name="Schmidtheini T."/>
            <person name="Reichert B."/>
            <person name="Portetelle D."/>
            <person name="Perez-Alonso M."/>
            <person name="Boutry M."/>
            <person name="Bancroft I."/>
            <person name="Vos P."/>
            <person name="Hoheisel J."/>
            <person name="Zimmermann W."/>
            <person name="Wedler H."/>
            <person name="Ridley P."/>
            <person name="Langham S.-A."/>
            <person name="McCullagh B."/>
            <person name="Bilham L."/>
            <person name="Robben J."/>
            <person name="van der Schueren J."/>
            <person name="Grymonprez B."/>
            <person name="Chuang Y.-J."/>
            <person name="Vandenbussche F."/>
            <person name="Braeken M."/>
            <person name="Weltjens I."/>
            <person name="Voet M."/>
            <person name="Bastiaens I."/>
            <person name="Aert R."/>
            <person name="Defoor E."/>
            <person name="Weitzenegger T."/>
            <person name="Bothe G."/>
            <person name="Ramsperger U."/>
            <person name="Hilbert H."/>
            <person name="Braun M."/>
            <person name="Holzer E."/>
            <person name="Brandt A."/>
            <person name="Peters S."/>
            <person name="van Staveren M."/>
            <person name="Dirkse W."/>
            <person name="Mooijman P."/>
            <person name="Klein Lankhorst R."/>
            <person name="Rose M."/>
            <person name="Hauf J."/>
            <person name="Koetter P."/>
            <person name="Berneiser S."/>
            <person name="Hempel S."/>
            <person name="Feldpausch M."/>
            <person name="Lamberth S."/>
            <person name="Van den Daele H."/>
            <person name="De Keyser A."/>
            <person name="Buysshaert C."/>
            <person name="Gielen J."/>
            <person name="Villarroel R."/>
            <person name="De Clercq R."/>
            <person name="van Montagu M."/>
            <person name="Rogers J."/>
            <person name="Cronin A."/>
            <person name="Quail M.A."/>
            <person name="Bray-Allen S."/>
            <person name="Clark L."/>
            <person name="Doggett J."/>
            <person name="Hall S."/>
            <person name="Kay M."/>
            <person name="Lennard N."/>
            <person name="McLay K."/>
            <person name="Mayes R."/>
            <person name="Pettett A."/>
            <person name="Rajandream M.A."/>
            <person name="Lyne M."/>
            <person name="Benes V."/>
            <person name="Rechmann S."/>
            <person name="Borkova D."/>
            <person name="Bloecker H."/>
            <person name="Scharfe M."/>
            <person name="Grimm M."/>
            <person name="Loehnert T.-H."/>
            <person name="Dose S."/>
            <person name="de Haan M."/>
            <person name="Maarse A.C."/>
            <person name="Schaefer M."/>
            <person name="Mueller-Auer S."/>
            <person name="Gabel C."/>
            <person name="Fuchs M."/>
            <person name="Fartmann B."/>
            <person name="Granderath K."/>
            <person name="Dauner D."/>
            <person name="Herzl A."/>
            <person name="Neumann S."/>
            <person name="Argiriou A."/>
            <person name="Vitale D."/>
            <person name="Liguori R."/>
            <person name="Piravandi E."/>
            <person name="Massenet O."/>
            <person name="Quigley F."/>
            <person name="Clabauld G."/>
            <person name="Muendlein A."/>
            <person name="Felber R."/>
            <person name="Schnabl S."/>
            <person name="Hiller R."/>
            <person name="Schmidt W."/>
            <person name="Lecharny A."/>
            <person name="Aubourg S."/>
            <person name="Chefdor F."/>
            <person name="Cooke R."/>
            <person name="Berger C."/>
            <person name="Monfort A."/>
            <person name="Casacuberta E."/>
            <person name="Gibbons T."/>
            <person name="Weber N."/>
            <person name="Vandenbol M."/>
            <person name="Bargues M."/>
            <person name="Terol J."/>
            <person name="Torres A."/>
            <person name="Perez-Perez A."/>
            <person name="Purnelle B."/>
            <person name="Bent E."/>
            <person name="Johnson S."/>
            <person name="Tacon D."/>
            <person name="Jesse T."/>
            <person name="Heijnen L."/>
            <person name="Schwarz S."/>
            <person name="Scholler P."/>
            <person name="Heber S."/>
            <person name="Francs P."/>
            <person name="Bielke C."/>
            <person name="Frishman D."/>
            <person name="Haase D."/>
            <person name="Lemcke K."/>
            <person name="Mewes H.-W."/>
            <person name="Stocker S."/>
            <person name="Zaccaria P."/>
            <person name="Bevan M."/>
            <person name="Wilson R.K."/>
            <person name="de la Bastide M."/>
            <person name="Habermann K."/>
            <person name="Parnell L."/>
            <person name="Dedhia N."/>
            <person name="Gnoj L."/>
            <person name="Schutz K."/>
            <person name="Huang E."/>
            <person name="Spiegel L."/>
            <person name="Sekhon M."/>
            <person name="Murray J."/>
            <person name="Sheet P."/>
            <person name="Cordes M."/>
            <person name="Abu-Threideh J."/>
            <person name="Stoneking T."/>
            <person name="Kalicki J."/>
            <person name="Graves T."/>
            <person name="Harmon G."/>
            <person name="Edwards J."/>
            <person name="Latreille P."/>
            <person name="Courtney L."/>
            <person name="Cloud J."/>
            <person name="Abbott A."/>
            <person name="Scott K."/>
            <person name="Johnson D."/>
            <person name="Minx P."/>
            <person name="Bentley D."/>
            <person name="Fulton B."/>
            <person name="Miller N."/>
            <person name="Greco T."/>
            <person name="Kemp K."/>
            <person name="Kramer J."/>
            <person name="Fulton L."/>
            <person name="Mardis E."/>
            <person name="Dante M."/>
            <person name="Pepin K."/>
            <person name="Hillier L.W."/>
            <person name="Nelson J."/>
            <person name="Spieth J."/>
            <person name="Ryan E."/>
            <person name="Andrews S."/>
            <person name="Geisel C."/>
            <person name="Layman D."/>
            <person name="Du H."/>
            <person name="Ali J."/>
            <person name="Berghoff A."/>
            <person name="Jones K."/>
            <person name="Drone K."/>
            <person name="Cotton M."/>
            <person name="Joshu C."/>
            <person name="Antonoiu B."/>
            <person name="Zidanic M."/>
            <person name="Strong C."/>
            <person name="Sun H."/>
            <person name="Lamar B."/>
            <person name="Yordan C."/>
            <person name="Ma P."/>
            <person name="Zhong J."/>
            <person name="Preston R."/>
            <person name="Vil D."/>
            <person name="Shekher M."/>
            <person name="Matero A."/>
            <person name="Shah R."/>
            <person name="Swaby I.K."/>
            <person name="O'Shaughnessy A."/>
            <person name="Rodriguez M."/>
            <person name="Hoffman J."/>
            <person name="Till S."/>
            <person name="Granat S."/>
            <person name="Shohdy N."/>
            <person name="Hasegawa A."/>
            <person name="Hameed A."/>
            <person name="Lodhi M."/>
            <person name="Johnson A."/>
            <person name="Chen E."/>
            <person name="Marra M.A."/>
            <person name="Martienssen R."/>
            <person name="McCombie W.R."/>
        </authorList>
    </citation>
    <scope>NUCLEOTIDE SEQUENCE [LARGE SCALE GENOMIC DNA]</scope>
    <source>
        <strain>cv. Columbia</strain>
    </source>
</reference>
<reference key="4">
    <citation type="journal article" date="2017" name="Plant J.">
        <title>Araport11: a complete reannotation of the Arabidopsis thaliana reference genome.</title>
        <authorList>
            <person name="Cheng C.Y."/>
            <person name="Krishnakumar V."/>
            <person name="Chan A.P."/>
            <person name="Thibaud-Nissen F."/>
            <person name="Schobel S."/>
            <person name="Town C.D."/>
        </authorList>
    </citation>
    <scope>GENOME REANNOTATION</scope>
    <source>
        <strain>cv. Columbia</strain>
    </source>
</reference>
<reference key="5">
    <citation type="journal article" date="2001" name="Curr. Opin. Plant Biol.">
        <title>The R2R3-MYB gene family in Arabidopsis thaliana.</title>
        <authorList>
            <person name="Stracke R."/>
            <person name="Werber M."/>
            <person name="Weisshaar B."/>
        </authorList>
    </citation>
    <scope>GENE FAMILY</scope>
    <scope>NOMENCLATURE</scope>
</reference>
<reference key="6">
    <citation type="journal article" date="2007" name="Development">
        <title>R1R2R3-Myb proteins positively regulate cytokinesis through activation of KNOLLE transcription in Arabidopsis thaliana.</title>
        <authorList>
            <person name="Haga N."/>
            <person name="Kato K."/>
            <person name="Murase M."/>
            <person name="Araki S."/>
            <person name="Kubo M."/>
            <person name="Demura T."/>
            <person name="Suzuki K."/>
            <person name="Mueller I."/>
            <person name="Voss U."/>
            <person name="Juergens G."/>
            <person name="Ito M."/>
        </authorList>
    </citation>
    <scope>DISRUPTION PHENOTYPE</scope>
    <scope>INDUCTION</scope>
    <scope>TISSUE SPECIFICITY</scope>
    <scope>DEVELOPMENTAL STAGE</scope>
    <scope>GENE FAMILY</scope>
    <source>
        <strain>cv. Columbia</strain>
    </source>
</reference>
<reference key="7">
    <citation type="journal article" date="2011" name="Plant Physiol.">
        <title>Mutations in MYB3R1 and MYB3R4 cause pleiotropic developmental defects and preferential down-regulation of multiple G2/M-specific genes in Arabidopsis.</title>
        <authorList>
            <person name="Haga N."/>
            <person name="Kobayashi K."/>
            <person name="Suzuki T."/>
            <person name="Maeo K."/>
            <person name="Kubo M."/>
            <person name="Ohtani M."/>
            <person name="Mitsuda N."/>
            <person name="Demura T."/>
            <person name="Nakamura K."/>
            <person name="Juergens G."/>
            <person name="Ito M."/>
        </authorList>
    </citation>
    <scope>FUNCTION</scope>
    <scope>DISRUPTION PHENOTYPE</scope>
    <source>
        <strain>cv. Columbia</strain>
    </source>
</reference>
<reference key="8">
    <citation type="journal article" date="2015" name="EMBO J.">
        <title>Transcriptional repression by MYB3R proteins regulates plant organ growth.</title>
        <authorList>
            <person name="Kobayashi K."/>
            <person name="Suzuki T."/>
            <person name="Iwata E."/>
            <person name="Nakamichi N."/>
            <person name="Suzuki T."/>
            <person name="Chen P."/>
            <person name="Ohtani M."/>
            <person name="Ishida T."/>
            <person name="Hosoya H."/>
            <person name="Mueller S."/>
            <person name="Leviczky T."/>
            <person name="Pettko-Szandtner A."/>
            <person name="Darula Z."/>
            <person name="Iwamoto A."/>
            <person name="Nomoto M."/>
            <person name="Tada Y."/>
            <person name="Higashiyama T."/>
            <person name="Demura T."/>
            <person name="Doonan J.H."/>
            <person name="Hauser M.T."/>
            <person name="Sugimoto K."/>
            <person name="Umeda M."/>
            <person name="Magyar Z."/>
            <person name="Boegre L."/>
            <person name="Ito M."/>
        </authorList>
    </citation>
    <scope>FUNCTION</scope>
    <scope>DISRUPTION PHENOTYPE</scope>
    <scope>DEVELOPMENTAL STAGE</scope>
    <source>
        <strain>cv. Columbia</strain>
    </source>
</reference>
<keyword id="KW-0010">Activator</keyword>
<keyword id="KW-0025">Alternative splicing</keyword>
<keyword id="KW-0238">DNA-binding</keyword>
<keyword id="KW-0539">Nucleus</keyword>
<keyword id="KW-1185">Reference proteome</keyword>
<keyword id="KW-0677">Repeat</keyword>
<keyword id="KW-0678">Repressor</keyword>
<keyword id="KW-0804">Transcription</keyword>
<keyword id="KW-0805">Transcription regulation</keyword>
<gene>
    <name evidence="10" type="primary">MYB3R1</name>
    <name evidence="9" type="synonym">PC-MYB1</name>
    <name evidence="12" type="ordered locus">At4g32730</name>
    <name evidence="13" type="ORF">F4D11.70</name>
</gene>
<name>MB3R1_ARATH</name>
<dbReference type="EMBL" id="AF151646">
    <property type="protein sequence ID" value="AAD46772.1"/>
    <property type="molecule type" value="mRNA"/>
</dbReference>
<dbReference type="EMBL" id="AF176005">
    <property type="protein sequence ID" value="AAD53110.2"/>
    <property type="molecule type" value="mRNA"/>
</dbReference>
<dbReference type="EMBL" id="AF188677">
    <property type="protein sequence ID" value="AAF77637.1"/>
    <property type="molecule type" value="Genomic_DNA"/>
</dbReference>
<dbReference type="EMBL" id="AF189212">
    <property type="protein sequence ID" value="AAF77638.1"/>
    <property type="molecule type" value="Genomic_DNA"/>
</dbReference>
<dbReference type="EMBL" id="AF189784">
    <property type="protein sequence ID" value="AAF78886.1"/>
    <property type="molecule type" value="mRNA"/>
</dbReference>
<dbReference type="EMBL" id="AL022537">
    <property type="protein sequence ID" value="CAA18588.1"/>
    <property type="status" value="ALT_SEQ"/>
    <property type="molecule type" value="Genomic_DNA"/>
</dbReference>
<dbReference type="EMBL" id="AL161582">
    <property type="protein sequence ID" value="CAB79990.1"/>
    <property type="molecule type" value="Genomic_DNA"/>
</dbReference>
<dbReference type="EMBL" id="CP002687">
    <property type="protein sequence ID" value="AEE86111.1"/>
    <property type="molecule type" value="Genomic_DNA"/>
</dbReference>
<dbReference type="PIR" id="E85384">
    <property type="entry name" value="E85384"/>
</dbReference>
<dbReference type="PIR" id="T04452">
    <property type="entry name" value="T04452"/>
</dbReference>
<dbReference type="RefSeq" id="NP_194999.1">
    <molecule id="Q9S7G7-1"/>
    <property type="nucleotide sequence ID" value="NM_119426.2"/>
</dbReference>
<dbReference type="SMR" id="Q9S7G7"/>
<dbReference type="BioGRID" id="14695">
    <property type="interactions" value="1"/>
</dbReference>
<dbReference type="FunCoup" id="Q9S7G7">
    <property type="interactions" value="306"/>
</dbReference>
<dbReference type="STRING" id="3702.Q9S7G7"/>
<dbReference type="iPTMnet" id="Q9S7G7"/>
<dbReference type="PaxDb" id="3702-AT4G32730.2"/>
<dbReference type="EnsemblPlants" id="AT4G32730.1">
    <molecule id="Q9S7G7-1"/>
    <property type="protein sequence ID" value="AT4G32730.1"/>
    <property type="gene ID" value="AT4G32730"/>
</dbReference>
<dbReference type="GeneID" id="829409"/>
<dbReference type="Gramene" id="AT4G32730.1">
    <molecule id="Q9S7G7-1"/>
    <property type="protein sequence ID" value="AT4G32730.1"/>
    <property type="gene ID" value="AT4G32730"/>
</dbReference>
<dbReference type="KEGG" id="ath:AT4G32730"/>
<dbReference type="Araport" id="AT4G32730"/>
<dbReference type="TAIR" id="AT4G32730">
    <property type="gene designation" value="PC-MYB1"/>
</dbReference>
<dbReference type="eggNOG" id="KOG0048">
    <property type="taxonomic scope" value="Eukaryota"/>
</dbReference>
<dbReference type="HOGENOM" id="CLU_016150_0_1_1"/>
<dbReference type="InParanoid" id="Q9S7G7"/>
<dbReference type="PhylomeDB" id="Q9S7G7"/>
<dbReference type="PRO" id="PR:Q9S7G7"/>
<dbReference type="Proteomes" id="UP000006548">
    <property type="component" value="Chromosome 4"/>
</dbReference>
<dbReference type="ExpressionAtlas" id="Q9S7G7">
    <property type="expression patterns" value="baseline and differential"/>
</dbReference>
<dbReference type="GO" id="GO:0005634">
    <property type="term" value="C:nucleus"/>
    <property type="evidence" value="ECO:0007669"/>
    <property type="project" value="UniProtKB-SubCell"/>
</dbReference>
<dbReference type="GO" id="GO:0043565">
    <property type="term" value="F:sequence-specific DNA binding"/>
    <property type="evidence" value="ECO:0000314"/>
    <property type="project" value="UniProtKB"/>
</dbReference>
<dbReference type="GO" id="GO:0008285">
    <property type="term" value="P:negative regulation of cell population proliferation"/>
    <property type="evidence" value="ECO:0000315"/>
    <property type="project" value="UniProtKB"/>
</dbReference>
<dbReference type="GO" id="GO:1901181">
    <property type="term" value="P:negative regulation of cellular response to caffeine"/>
    <property type="evidence" value="ECO:0000315"/>
    <property type="project" value="UniProtKB"/>
</dbReference>
<dbReference type="GO" id="GO:0045892">
    <property type="term" value="P:negative regulation of DNA-templated transcription"/>
    <property type="evidence" value="ECO:0000315"/>
    <property type="project" value="UniProtKB"/>
</dbReference>
<dbReference type="GO" id="GO:0045893">
    <property type="term" value="P:positive regulation of DNA-templated transcription"/>
    <property type="evidence" value="ECO:0000315"/>
    <property type="project" value="UniProtKB"/>
</dbReference>
<dbReference type="GO" id="GO:0032465">
    <property type="term" value="P:regulation of cytokinesis"/>
    <property type="evidence" value="ECO:0000316"/>
    <property type="project" value="UniProtKB"/>
</dbReference>
<dbReference type="CDD" id="cd00167">
    <property type="entry name" value="SANT"/>
    <property type="match status" value="3"/>
</dbReference>
<dbReference type="FunFam" id="1.10.10.60:FF:000324">
    <property type="entry name" value="Transcription factor MYB3R-2"/>
    <property type="match status" value="1"/>
</dbReference>
<dbReference type="FunFam" id="1.10.10.60:FF:000010">
    <property type="entry name" value="Transcriptional activator Myb isoform A"/>
    <property type="match status" value="1"/>
</dbReference>
<dbReference type="FunFam" id="1.10.10.60:FF:000016">
    <property type="entry name" value="Transcriptional activator Myb isoform A"/>
    <property type="match status" value="1"/>
</dbReference>
<dbReference type="Gene3D" id="1.10.10.60">
    <property type="entry name" value="Homeodomain-like"/>
    <property type="match status" value="3"/>
</dbReference>
<dbReference type="InterPro" id="IPR009057">
    <property type="entry name" value="Homeodomain-like_sf"/>
</dbReference>
<dbReference type="InterPro" id="IPR017930">
    <property type="entry name" value="Myb_dom"/>
</dbReference>
<dbReference type="InterPro" id="IPR050560">
    <property type="entry name" value="MYB_TF"/>
</dbReference>
<dbReference type="InterPro" id="IPR001005">
    <property type="entry name" value="SANT/Myb"/>
</dbReference>
<dbReference type="PANTHER" id="PTHR45614">
    <property type="entry name" value="MYB PROTEIN-RELATED"/>
    <property type="match status" value="1"/>
</dbReference>
<dbReference type="Pfam" id="PF00249">
    <property type="entry name" value="Myb_DNA-binding"/>
    <property type="match status" value="3"/>
</dbReference>
<dbReference type="SMART" id="SM00717">
    <property type="entry name" value="SANT"/>
    <property type="match status" value="3"/>
</dbReference>
<dbReference type="SUPFAM" id="SSF46689">
    <property type="entry name" value="Homeodomain-like"/>
    <property type="match status" value="2"/>
</dbReference>
<dbReference type="PROSITE" id="PS51294">
    <property type="entry name" value="HTH_MYB"/>
    <property type="match status" value="3"/>
</dbReference>
<evidence type="ECO:0000250" key="1">
    <source>
        <dbReference type="UniProtKB" id="Q8H1P9"/>
    </source>
</evidence>
<evidence type="ECO:0000255" key="2">
    <source>
        <dbReference type="PROSITE-ProRule" id="PRU00625"/>
    </source>
</evidence>
<evidence type="ECO:0000255" key="3">
    <source>
        <dbReference type="PROSITE-ProRule" id="PRU00768"/>
    </source>
</evidence>
<evidence type="ECO:0000256" key="4">
    <source>
        <dbReference type="SAM" id="MobiDB-lite"/>
    </source>
</evidence>
<evidence type="ECO:0000269" key="5">
    <source>
    </source>
</evidence>
<evidence type="ECO:0000269" key="6">
    <source>
    </source>
</evidence>
<evidence type="ECO:0000269" key="7">
    <source>
    </source>
</evidence>
<evidence type="ECO:0000269" key="8">
    <source>
    </source>
</evidence>
<evidence type="ECO:0000303" key="9">
    <source>
    </source>
</evidence>
<evidence type="ECO:0000303" key="10">
    <source>
    </source>
</evidence>
<evidence type="ECO:0000305" key="11"/>
<evidence type="ECO:0000312" key="12">
    <source>
        <dbReference type="Araport" id="AT4G32730"/>
    </source>
</evidence>
<evidence type="ECO:0000312" key="13">
    <source>
        <dbReference type="EMBL" id="CAA18588.1"/>
    </source>
</evidence>
<organism>
    <name type="scientific">Arabidopsis thaliana</name>
    <name type="common">Mouse-ear cress</name>
    <dbReference type="NCBI Taxonomy" id="3702"/>
    <lineage>
        <taxon>Eukaryota</taxon>
        <taxon>Viridiplantae</taxon>
        <taxon>Streptophyta</taxon>
        <taxon>Embryophyta</taxon>
        <taxon>Tracheophyta</taxon>
        <taxon>Spermatophyta</taxon>
        <taxon>Magnoliopsida</taxon>
        <taxon>eudicotyledons</taxon>
        <taxon>Gunneridae</taxon>
        <taxon>Pentapetalae</taxon>
        <taxon>rosids</taxon>
        <taxon>malvids</taxon>
        <taxon>Brassicales</taxon>
        <taxon>Brassicaceae</taxon>
        <taxon>Camelineae</taxon>
        <taxon>Arabidopsis</taxon>
    </lineage>
</organism>
<sequence length="776" mass="86506">MKREMKAPTTPLESLQGDLKGKQGRTSGPARRSTKGQWTPEEDEVLCKAVERFQGKNWKKIAECFKDRTDVQCLHRWQKVLNPELVKGPWSKEEDNTIIDLVEKYGPKKWSTISQHLPGRIGKQCRERWHNHLNPGINKNAWTQEEELTLIRAHQIYGNKWAELMKFLPGRSDNSIKNHWNSSVKKKLDSYYASGLLDQCQSSPLIALQNKSIASSSSWMHSNGDEGSSRPGVDAEESECSQASTVFSQSTNDLQDEVQRGNEEYYMPEFHSGTEQQISNAASHAEPYYPSFKDVKIVVPEISCETECSKKFQNLNCSHELRTTTATEDQLPGVSNDAKQDRGLELLTHNMDNGGKNQALQQDFQSSVRLSDQPFLSNSDTDPEAQTLITDEECCRVLFPDNMKDSSTSSGEQGRNMVDPQNGKGSLCSQAAETHAHETGKVPALPWHPSSSEGLAGHNCVPLLDSDLKDSLLPRNDSNAPIQGCRLFGATELECKTDTNDGFIDTYGHVTSHGNDDNGGFPEQQGLSYIPKDSLKLVPLNSFSSPSRVNKIYFPIDDKPAEKDKGALCYEPPRFPSADIPFFSCDLVPSNSDLRQEYSPFGIRQLMISSMNCTTPLRLWDSPCHDRSPDVMLNDTAKSFSGAPSILKKRHRDLLSPVLDRRKDKKLKRAATSSLANDFSRLDVMLDEGDDCMTSRPSESPEDKNICASPSIARDNRNCASARLYQEMIPIDEEPKETLESGGVTSMQNENGCNDGGASAKNVSPSLSLHIIWYQL</sequence>
<accession>Q9S7G7</accession>
<accession>O65528</accession>
<accession>Q9LDX5</accession>
<feature type="chain" id="PRO_0000234361" description="Transcription factor MYB3R-1">
    <location>
        <begin position="1"/>
        <end position="776"/>
    </location>
</feature>
<feature type="domain" description="HTH myb-type 1" evidence="2">
    <location>
        <begin position="30"/>
        <end position="81"/>
    </location>
</feature>
<feature type="domain" description="HTH myb-type 2" evidence="2">
    <location>
        <begin position="82"/>
        <end position="137"/>
    </location>
</feature>
<feature type="domain" description="HTH myb-type 3" evidence="2">
    <location>
        <begin position="138"/>
        <end position="188"/>
    </location>
</feature>
<feature type="DNA-binding region" description="H-T-H motif" evidence="2">
    <location>
        <begin position="58"/>
        <end position="81"/>
    </location>
</feature>
<feature type="DNA-binding region" description="H-T-H motif" evidence="2">
    <location>
        <begin position="110"/>
        <end position="133"/>
    </location>
</feature>
<feature type="DNA-binding region" description="H-T-H motif" evidence="2">
    <location>
        <begin position="161"/>
        <end position="184"/>
    </location>
</feature>
<feature type="region of interest" description="Disordered" evidence="4">
    <location>
        <begin position="1"/>
        <end position="41"/>
    </location>
</feature>
<feature type="region of interest" description="Disordered" evidence="4">
    <location>
        <begin position="217"/>
        <end position="253"/>
    </location>
</feature>
<feature type="region of interest" description="Disordered" evidence="4">
    <location>
        <begin position="364"/>
        <end position="384"/>
    </location>
</feature>
<feature type="region of interest" description="Disordered" evidence="4">
    <location>
        <begin position="401"/>
        <end position="435"/>
    </location>
</feature>
<feature type="short sequence motif" description="Nuclear localization signal" evidence="3">
    <location>
        <begin position="648"/>
        <end position="655"/>
    </location>
</feature>
<feature type="compositionally biased region" description="Polar residues" evidence="4">
    <location>
        <begin position="240"/>
        <end position="253"/>
    </location>
</feature>
<feature type="compositionally biased region" description="Polar residues" evidence="4">
    <location>
        <begin position="364"/>
        <end position="380"/>
    </location>
</feature>
<feature type="compositionally biased region" description="Polar residues" evidence="4">
    <location>
        <begin position="423"/>
        <end position="432"/>
    </location>
</feature>
<feature type="sequence variant" description="In strain: cv. Landsberg erecta.">
    <original>K</original>
    <variation>R</variation>
    <location>
        <position position="87"/>
    </location>
</feature>
<feature type="sequence variant" description="In strain: cv. Landsberg erecta.">
    <original>N</original>
    <variation>S</variation>
    <location>
        <position position="223"/>
    </location>
</feature>
<feature type="sequence variant" description="In strain: cv. Landsberg erecta.">
    <original>N</original>
    <variation>S</variation>
    <location>
        <position position="353"/>
    </location>
</feature>
<feature type="sequence variant" description="In strain: cv. Landsberg erecta.">
    <original>D</original>
    <variation>N</variation>
    <location>
        <position position="586"/>
    </location>
</feature>
<feature type="sequence variant" description="In strain: cv. Landsberg erecta.">
    <original>M</original>
    <variation>V</variation>
    <location>
        <position position="607"/>
    </location>
</feature>
<comment type="function">
    <text evidence="6 7 8">Transcription factor that binds 5'-AACGG-3' motifs in gene promoters (PubMed:21862669). Transcription activator involved in the regulation of cytokinesis, probably via the activation of several G2/M phase-specific genes transcription (e.g. KNOLLE) (PubMed:17287251, PubMed:21862669). Transcription repressor that regulates organ growth. Binds to the promoters of G2/M-specific genes and to E2F target genes to prevent their expression in post-mitotic cells and to restrict the time window of their expression in proliferating cells (PubMed:26069325). Required for the maintenance of diploidy (PubMed:21862669).</text>
</comment>
<comment type="subunit">
    <text evidence="1">Component of a DREAM-like complex which modulates a variety of developmentally regulated genes and of the mitotic genes in proliferating and differentiated cells.</text>
</comment>
<comment type="subcellular location">
    <subcellularLocation>
        <location evidence="2 3">Nucleus</location>
    </subcellularLocation>
</comment>
<comment type="alternative products">
    <event type="alternative splicing"/>
    <isoform>
        <id>Q9S7G7-1</id>
        <name>1</name>
        <sequence type="displayed"/>
    </isoform>
    <text evidence="11">A number of isoforms are produced. According to EST sequences.</text>
</comment>
<comment type="tissue specificity">
    <text evidence="5 6">Expressed ubiquitously at low levels (PubMed:10743663). Expressed in roots, cotyledons, flowers and leaves, especially in vascular tissues (PubMed:17287251).</text>
</comment>
<comment type="developmental stage">
    <text evidence="6 8">Accumulates in the columella root cap. Also present in floral organs in young flower buds. Strongly expressed in vascular tissues of filaments and anthers. Weakly and uniformly present in the developing embryo and maternal tissues (PubMed:17287251). Expressed both in proliferating and maturing stages of leaves (PubMed:26069325).</text>
</comment>
<comment type="induction">
    <text evidence="6">Constant levels during cell cycle. Activated by CYCB1.</text>
</comment>
<comment type="disruption phenotype">
    <text evidence="6 7 8">The double mutant myb3r1 myb3r4 often fails to complete cytokinesis, resulting in multinucleate cells with gapped walls and cell wall stubs in diverse tissues (e.g. in embryo during the first or second division after fertilization, in stomata guard mother cell) and several pleiotropic developmental defects, and associated with the selective reduction of several G2/M phase-specific genes transcript levels (e.g. CYCB2, CDC20.1 and KNOLLE). Hypersensitivity to caffeine, an inhibitor of cytokinesis (PubMed:17287251, PubMed:21862669). In triple mutant myb3r1 myb3r3 myb3r5, up-regulation of many G2/M-specific genes leading to larger seeds, organs and embryos due to overproliferation and ectopic cell divisions (PubMed:26069325).</text>
</comment>
<comment type="sequence caution" evidence="11">
    <conflict type="erroneous gene model prediction">
        <sequence resource="EMBL-CDS" id="CAA18588"/>
    </conflict>
</comment>